<gene>
    <name type="ordered locus">YpAngola_A2324</name>
</gene>
<evidence type="ECO:0000255" key="1">
    <source>
        <dbReference type="HAMAP-Rule" id="MF_01067"/>
    </source>
</evidence>
<organism>
    <name type="scientific">Yersinia pestis bv. Antiqua (strain Angola)</name>
    <dbReference type="NCBI Taxonomy" id="349746"/>
    <lineage>
        <taxon>Bacteria</taxon>
        <taxon>Pseudomonadati</taxon>
        <taxon>Pseudomonadota</taxon>
        <taxon>Gammaproteobacteria</taxon>
        <taxon>Enterobacterales</taxon>
        <taxon>Yersiniaceae</taxon>
        <taxon>Yersinia</taxon>
    </lineage>
</organism>
<accession>A9R9A1</accession>
<protein>
    <recommendedName>
        <fullName evidence="1">UPF0259 membrane protein YpAngola_A2324</fullName>
    </recommendedName>
</protein>
<keyword id="KW-0997">Cell inner membrane</keyword>
<keyword id="KW-1003">Cell membrane</keyword>
<keyword id="KW-0472">Membrane</keyword>
<keyword id="KW-0812">Transmembrane</keyword>
<keyword id="KW-1133">Transmembrane helix</keyword>
<proteinExistence type="inferred from homology"/>
<sequence length="256" mass="27754">MPITANTLYRDSFNFLRNQIAAILLLALLTAFITVMLNQTFMPASEQLSILSIPENDITSSGNLSISEIVSQMTPEQQMVLLRVSAVATFSALVGNVLLVGGLLTLIAMVSQGRRVSALQAIGLSLPILPRLLVLMFISTLVIQLGLTFFIVPGVAIAIALSLSPIIVTNERMGIFAAMKASAQLAFANVRLIVPAMMLWIAVKLLLLFLISRFTVLPPTIATIVLSTLSNLASALLLVYLFRLYMLLRPVSLDKQ</sequence>
<dbReference type="EMBL" id="CP000901">
    <property type="protein sequence ID" value="ABX85701.1"/>
    <property type="molecule type" value="Genomic_DNA"/>
</dbReference>
<dbReference type="RefSeq" id="WP_002210639.1">
    <property type="nucleotide sequence ID" value="NZ_CP009935.1"/>
</dbReference>
<dbReference type="KEGG" id="ypg:YpAngola_A2324"/>
<dbReference type="PATRIC" id="fig|349746.12.peg.3335"/>
<dbReference type="GO" id="GO:0005886">
    <property type="term" value="C:plasma membrane"/>
    <property type="evidence" value="ECO:0007669"/>
    <property type="project" value="UniProtKB-SubCell"/>
</dbReference>
<dbReference type="HAMAP" id="MF_01067">
    <property type="entry name" value="UPF0259"/>
    <property type="match status" value="1"/>
</dbReference>
<dbReference type="InterPro" id="IPR009627">
    <property type="entry name" value="UPF0259"/>
</dbReference>
<dbReference type="NCBIfam" id="NF002774">
    <property type="entry name" value="PRK02868.1"/>
    <property type="match status" value="1"/>
</dbReference>
<dbReference type="Pfam" id="PF06790">
    <property type="entry name" value="UPF0259"/>
    <property type="match status" value="1"/>
</dbReference>
<feature type="chain" id="PRO_1000136597" description="UPF0259 membrane protein YpAngola_A2324">
    <location>
        <begin position="1"/>
        <end position="256"/>
    </location>
</feature>
<feature type="transmembrane region" description="Helical" evidence="1">
    <location>
        <begin position="20"/>
        <end position="40"/>
    </location>
</feature>
<feature type="transmembrane region" description="Helical" evidence="1">
    <location>
        <begin position="90"/>
        <end position="110"/>
    </location>
</feature>
<feature type="transmembrane region" description="Helical" evidence="1">
    <location>
        <begin position="118"/>
        <end position="138"/>
    </location>
</feature>
<feature type="transmembrane region" description="Helical" evidence="1">
    <location>
        <begin position="141"/>
        <end position="161"/>
    </location>
</feature>
<feature type="transmembrane region" description="Helical" evidence="1">
    <location>
        <begin position="192"/>
        <end position="212"/>
    </location>
</feature>
<feature type="transmembrane region" description="Helical" evidence="1">
    <location>
        <begin position="221"/>
        <end position="241"/>
    </location>
</feature>
<reference key="1">
    <citation type="journal article" date="2010" name="J. Bacteriol.">
        <title>Genome sequence of the deep-rooted Yersinia pestis strain Angola reveals new insights into the evolution and pangenome of the plague bacterium.</title>
        <authorList>
            <person name="Eppinger M."/>
            <person name="Worsham P.L."/>
            <person name="Nikolich M.P."/>
            <person name="Riley D.R."/>
            <person name="Sebastian Y."/>
            <person name="Mou S."/>
            <person name="Achtman M."/>
            <person name="Lindler L.E."/>
            <person name="Ravel J."/>
        </authorList>
    </citation>
    <scope>NUCLEOTIDE SEQUENCE [LARGE SCALE GENOMIC DNA]</scope>
    <source>
        <strain>Angola</strain>
    </source>
</reference>
<name>Y2324_YERPG</name>
<comment type="subcellular location">
    <subcellularLocation>
        <location evidence="1">Cell inner membrane</location>
        <topology evidence="1">Multi-pass membrane protein</topology>
    </subcellularLocation>
</comment>
<comment type="similarity">
    <text evidence="1">Belongs to the UPF0259 family.</text>
</comment>